<proteinExistence type="inferred from homology"/>
<keyword id="KW-0687">Ribonucleoprotein</keyword>
<keyword id="KW-0689">Ribosomal protein</keyword>
<keyword id="KW-0694">RNA-binding</keyword>
<keyword id="KW-0699">rRNA-binding</keyword>
<feature type="chain" id="PRO_1000051125" description="Small ribosomal subunit protein uS19">
    <location>
        <begin position="1"/>
        <end position="92"/>
    </location>
</feature>
<protein>
    <recommendedName>
        <fullName evidence="1">Small ribosomal subunit protein uS19</fullName>
    </recommendedName>
    <alternativeName>
        <fullName evidence="2">30S ribosomal protein S19</fullName>
    </alternativeName>
</protein>
<reference key="1">
    <citation type="submission" date="2006-09" db="EMBL/GenBank/DDBJ databases">
        <title>Complete sequence of chromosome 1 of Shewanella sp. ANA-3.</title>
        <authorList>
            <person name="Copeland A."/>
            <person name="Lucas S."/>
            <person name="Lapidus A."/>
            <person name="Barry K."/>
            <person name="Detter J.C."/>
            <person name="Glavina del Rio T."/>
            <person name="Hammon N."/>
            <person name="Israni S."/>
            <person name="Dalin E."/>
            <person name="Tice H."/>
            <person name="Pitluck S."/>
            <person name="Chertkov O."/>
            <person name="Brettin T."/>
            <person name="Bruce D."/>
            <person name="Han C."/>
            <person name="Tapia R."/>
            <person name="Gilna P."/>
            <person name="Schmutz J."/>
            <person name="Larimer F."/>
            <person name="Land M."/>
            <person name="Hauser L."/>
            <person name="Kyrpides N."/>
            <person name="Kim E."/>
            <person name="Newman D."/>
            <person name="Salticov C."/>
            <person name="Konstantinidis K."/>
            <person name="Klappenback J."/>
            <person name="Tiedje J."/>
            <person name="Richardson P."/>
        </authorList>
    </citation>
    <scope>NUCLEOTIDE SEQUENCE [LARGE SCALE GENOMIC DNA]</scope>
    <source>
        <strain>ANA-3</strain>
    </source>
</reference>
<evidence type="ECO:0000255" key="1">
    <source>
        <dbReference type="HAMAP-Rule" id="MF_00531"/>
    </source>
</evidence>
<evidence type="ECO:0000305" key="2"/>
<sequence length="92" mass="10472">MPRSLKKGPFIDLHLLKKVEKAMEAGDKKPIKTWSRRSMIIPNMIGLTIAVHNGRQHVPVFVTDEMIGHKLGEFSPTRTYRGHAADKKAKKR</sequence>
<name>RS19_SHESA</name>
<gene>
    <name evidence="1" type="primary">rpsS</name>
    <name type="ordered locus">Shewana3_0203</name>
</gene>
<organism>
    <name type="scientific">Shewanella sp. (strain ANA-3)</name>
    <dbReference type="NCBI Taxonomy" id="94122"/>
    <lineage>
        <taxon>Bacteria</taxon>
        <taxon>Pseudomonadati</taxon>
        <taxon>Pseudomonadota</taxon>
        <taxon>Gammaproteobacteria</taxon>
        <taxon>Alteromonadales</taxon>
        <taxon>Shewanellaceae</taxon>
        <taxon>Shewanella</taxon>
    </lineage>
</organism>
<comment type="function">
    <text evidence="1">Protein S19 forms a complex with S13 that binds strongly to the 16S ribosomal RNA.</text>
</comment>
<comment type="similarity">
    <text evidence="1">Belongs to the universal ribosomal protein uS19 family.</text>
</comment>
<accession>A0KRM8</accession>
<dbReference type="EMBL" id="CP000469">
    <property type="protein sequence ID" value="ABK46447.1"/>
    <property type="molecule type" value="Genomic_DNA"/>
</dbReference>
<dbReference type="RefSeq" id="WP_006083596.1">
    <property type="nucleotide sequence ID" value="NC_008577.1"/>
</dbReference>
<dbReference type="SMR" id="A0KRM8"/>
<dbReference type="STRING" id="94122.Shewana3_0203"/>
<dbReference type="GeneID" id="94726190"/>
<dbReference type="KEGG" id="shn:Shewana3_0203"/>
<dbReference type="eggNOG" id="COG0185">
    <property type="taxonomic scope" value="Bacteria"/>
</dbReference>
<dbReference type="HOGENOM" id="CLU_144911_0_1_6"/>
<dbReference type="OrthoDB" id="9797833at2"/>
<dbReference type="Proteomes" id="UP000002589">
    <property type="component" value="Chromosome"/>
</dbReference>
<dbReference type="GO" id="GO:0005737">
    <property type="term" value="C:cytoplasm"/>
    <property type="evidence" value="ECO:0007669"/>
    <property type="project" value="UniProtKB-ARBA"/>
</dbReference>
<dbReference type="GO" id="GO:0015935">
    <property type="term" value="C:small ribosomal subunit"/>
    <property type="evidence" value="ECO:0007669"/>
    <property type="project" value="InterPro"/>
</dbReference>
<dbReference type="GO" id="GO:0019843">
    <property type="term" value="F:rRNA binding"/>
    <property type="evidence" value="ECO:0007669"/>
    <property type="project" value="UniProtKB-UniRule"/>
</dbReference>
<dbReference type="GO" id="GO:0003735">
    <property type="term" value="F:structural constituent of ribosome"/>
    <property type="evidence" value="ECO:0007669"/>
    <property type="project" value="InterPro"/>
</dbReference>
<dbReference type="GO" id="GO:0000028">
    <property type="term" value="P:ribosomal small subunit assembly"/>
    <property type="evidence" value="ECO:0007669"/>
    <property type="project" value="TreeGrafter"/>
</dbReference>
<dbReference type="GO" id="GO:0006412">
    <property type="term" value="P:translation"/>
    <property type="evidence" value="ECO:0007669"/>
    <property type="project" value="UniProtKB-UniRule"/>
</dbReference>
<dbReference type="FunFam" id="3.30.860.10:FF:000001">
    <property type="entry name" value="30S ribosomal protein S19"/>
    <property type="match status" value="1"/>
</dbReference>
<dbReference type="Gene3D" id="3.30.860.10">
    <property type="entry name" value="30s Ribosomal Protein S19, Chain A"/>
    <property type="match status" value="1"/>
</dbReference>
<dbReference type="HAMAP" id="MF_00531">
    <property type="entry name" value="Ribosomal_uS19"/>
    <property type="match status" value="1"/>
</dbReference>
<dbReference type="InterPro" id="IPR002222">
    <property type="entry name" value="Ribosomal_uS19"/>
</dbReference>
<dbReference type="InterPro" id="IPR005732">
    <property type="entry name" value="Ribosomal_uS19_bac-type"/>
</dbReference>
<dbReference type="InterPro" id="IPR020934">
    <property type="entry name" value="Ribosomal_uS19_CS"/>
</dbReference>
<dbReference type="InterPro" id="IPR023575">
    <property type="entry name" value="Ribosomal_uS19_SF"/>
</dbReference>
<dbReference type="NCBIfam" id="TIGR01050">
    <property type="entry name" value="rpsS_bact"/>
    <property type="match status" value="1"/>
</dbReference>
<dbReference type="PANTHER" id="PTHR11880">
    <property type="entry name" value="RIBOSOMAL PROTEIN S19P FAMILY MEMBER"/>
    <property type="match status" value="1"/>
</dbReference>
<dbReference type="PANTHER" id="PTHR11880:SF8">
    <property type="entry name" value="SMALL RIBOSOMAL SUBUNIT PROTEIN US19M"/>
    <property type="match status" value="1"/>
</dbReference>
<dbReference type="Pfam" id="PF00203">
    <property type="entry name" value="Ribosomal_S19"/>
    <property type="match status" value="1"/>
</dbReference>
<dbReference type="PIRSF" id="PIRSF002144">
    <property type="entry name" value="Ribosomal_S19"/>
    <property type="match status" value="1"/>
</dbReference>
<dbReference type="PRINTS" id="PR00975">
    <property type="entry name" value="RIBOSOMALS19"/>
</dbReference>
<dbReference type="SUPFAM" id="SSF54570">
    <property type="entry name" value="Ribosomal protein S19"/>
    <property type="match status" value="1"/>
</dbReference>
<dbReference type="PROSITE" id="PS00323">
    <property type="entry name" value="RIBOSOMAL_S19"/>
    <property type="match status" value="1"/>
</dbReference>